<evidence type="ECO:0000255" key="1">
    <source>
        <dbReference type="HAMAP-Rule" id="MF_00451"/>
    </source>
</evidence>
<evidence type="ECO:0007829" key="2">
    <source>
        <dbReference type="PDB" id="3Q8U"/>
    </source>
</evidence>
<evidence type="ECO:0007829" key="3">
    <source>
        <dbReference type="PDB" id="3Q8Y"/>
    </source>
</evidence>
<reference key="1">
    <citation type="journal article" date="2005" name="J. Bacteriol.">
        <title>Insights on evolution of virulence and resistance from the complete genome analysis of an early methicillin-resistant Staphylococcus aureus strain and a biofilm-producing methicillin-resistant Staphylococcus epidermidis strain.</title>
        <authorList>
            <person name="Gill S.R."/>
            <person name="Fouts D.E."/>
            <person name="Archer G.L."/>
            <person name="Mongodin E.F."/>
            <person name="DeBoy R.T."/>
            <person name="Ravel J."/>
            <person name="Paulsen I.T."/>
            <person name="Kolonay J.F."/>
            <person name="Brinkac L.M."/>
            <person name="Beanan M.J."/>
            <person name="Dodson R.J."/>
            <person name="Daugherty S.C."/>
            <person name="Madupu R."/>
            <person name="Angiuoli S.V."/>
            <person name="Durkin A.S."/>
            <person name="Haft D.H."/>
            <person name="Vamathevan J.J."/>
            <person name="Khouri H."/>
            <person name="Utterback T.R."/>
            <person name="Lee C."/>
            <person name="Dimitrov G."/>
            <person name="Jiang L."/>
            <person name="Qin H."/>
            <person name="Weidman J."/>
            <person name="Tran K."/>
            <person name="Kang K.H."/>
            <person name="Hance I.R."/>
            <person name="Nelson K.E."/>
            <person name="Fraser C.M."/>
        </authorList>
    </citation>
    <scope>NUCLEOTIDE SEQUENCE [LARGE SCALE GENOMIC DNA]</scope>
    <source>
        <strain>COL</strain>
    </source>
</reference>
<protein>
    <recommendedName>
        <fullName evidence="1">Nucleoside diphosphate kinase</fullName>
        <shortName evidence="1">NDK</shortName>
        <shortName evidence="1">NDP kinase</shortName>
        <ecNumber evidence="1">2.7.4.6</ecNumber>
    </recommendedName>
    <alternativeName>
        <fullName evidence="1">Nucleoside-2-P kinase</fullName>
    </alternativeName>
</protein>
<accession>Q5HFV4</accession>
<feature type="chain" id="PRO_0000137044" description="Nucleoside diphosphate kinase">
    <location>
        <begin position="1"/>
        <end position="149"/>
    </location>
</feature>
<feature type="active site" description="Pros-phosphohistidine intermediate" evidence="1">
    <location>
        <position position="115"/>
    </location>
</feature>
<feature type="binding site" evidence="1">
    <location>
        <position position="9"/>
    </location>
    <ligand>
        <name>ATP</name>
        <dbReference type="ChEBI" id="CHEBI:30616"/>
    </ligand>
</feature>
<feature type="binding site" evidence="1">
    <location>
        <position position="57"/>
    </location>
    <ligand>
        <name>ATP</name>
        <dbReference type="ChEBI" id="CHEBI:30616"/>
    </ligand>
</feature>
<feature type="binding site" evidence="1">
    <location>
        <position position="85"/>
    </location>
    <ligand>
        <name>ATP</name>
        <dbReference type="ChEBI" id="CHEBI:30616"/>
    </ligand>
</feature>
<feature type="binding site" evidence="1">
    <location>
        <position position="91"/>
    </location>
    <ligand>
        <name>ATP</name>
        <dbReference type="ChEBI" id="CHEBI:30616"/>
    </ligand>
</feature>
<feature type="binding site" evidence="1">
    <location>
        <position position="102"/>
    </location>
    <ligand>
        <name>ATP</name>
        <dbReference type="ChEBI" id="CHEBI:30616"/>
    </ligand>
</feature>
<feature type="binding site" evidence="1">
    <location>
        <position position="112"/>
    </location>
    <ligand>
        <name>ATP</name>
        <dbReference type="ChEBI" id="CHEBI:30616"/>
    </ligand>
</feature>
<feature type="strand" evidence="2">
    <location>
        <begin position="3"/>
        <end position="8"/>
    </location>
</feature>
<feature type="helix" evidence="2">
    <location>
        <begin position="10"/>
        <end position="14"/>
    </location>
</feature>
<feature type="helix" evidence="2">
    <location>
        <begin position="18"/>
        <end position="27"/>
    </location>
</feature>
<feature type="strand" evidence="2">
    <location>
        <begin position="31"/>
        <end position="38"/>
    </location>
</feature>
<feature type="helix" evidence="2">
    <location>
        <begin position="42"/>
        <end position="48"/>
    </location>
</feature>
<feature type="helix" evidence="2">
    <location>
        <begin position="50"/>
        <end position="52"/>
    </location>
</feature>
<feature type="helix" evidence="2">
    <location>
        <begin position="58"/>
        <end position="65"/>
    </location>
</feature>
<feature type="strand" evidence="2">
    <location>
        <begin position="70"/>
        <end position="77"/>
    </location>
</feature>
<feature type="helix" evidence="2">
    <location>
        <begin position="80"/>
        <end position="88"/>
    </location>
</feature>
<feature type="turn" evidence="2">
    <location>
        <begin position="93"/>
        <end position="95"/>
    </location>
</feature>
<feature type="helix" evidence="2">
    <location>
        <begin position="101"/>
        <end position="105"/>
    </location>
</feature>
<feature type="strand" evidence="3">
    <location>
        <begin position="108"/>
        <end position="111"/>
    </location>
</feature>
<feature type="strand" evidence="2">
    <location>
        <begin position="113"/>
        <end position="116"/>
    </location>
</feature>
<feature type="helix" evidence="2">
    <location>
        <begin position="120"/>
        <end position="130"/>
    </location>
</feature>
<feature type="helix" evidence="2">
    <location>
        <begin position="133"/>
        <end position="135"/>
    </location>
</feature>
<feature type="helix" evidence="2">
    <location>
        <begin position="144"/>
        <end position="147"/>
    </location>
</feature>
<organism>
    <name type="scientific">Staphylococcus aureus (strain COL)</name>
    <dbReference type="NCBI Taxonomy" id="93062"/>
    <lineage>
        <taxon>Bacteria</taxon>
        <taxon>Bacillati</taxon>
        <taxon>Bacillota</taxon>
        <taxon>Bacilli</taxon>
        <taxon>Bacillales</taxon>
        <taxon>Staphylococcaceae</taxon>
        <taxon>Staphylococcus</taxon>
    </lineage>
</organism>
<sequence length="149" mass="16575">MERTFLMIKPDAVQRNLIGEVISRIERKGLKLVGGKLMQVPMELAETHYGEHQGKPFYNDLISFITSAPVFAMVVEGEDAVNVSRHIIGSTNPSEASPGSIRGDLGLTVGRNIIHGSDSLESAEREINLWFNENEITSYASPRDAWLYE</sequence>
<name>NDK_STAAC</name>
<proteinExistence type="evidence at protein level"/>
<gene>
    <name evidence="1" type="primary">ndk</name>
    <name type="ordered locus">SACOL1509</name>
</gene>
<comment type="function">
    <text evidence="1">Major role in the synthesis of nucleoside triphosphates other than ATP. The ATP gamma phosphate is transferred to the NDP beta phosphate via a ping-pong mechanism, using a phosphorylated active-site intermediate.</text>
</comment>
<comment type="catalytic activity">
    <reaction evidence="1">
        <text>a 2'-deoxyribonucleoside 5'-diphosphate + ATP = a 2'-deoxyribonucleoside 5'-triphosphate + ADP</text>
        <dbReference type="Rhea" id="RHEA:44640"/>
        <dbReference type="ChEBI" id="CHEBI:30616"/>
        <dbReference type="ChEBI" id="CHEBI:61560"/>
        <dbReference type="ChEBI" id="CHEBI:73316"/>
        <dbReference type="ChEBI" id="CHEBI:456216"/>
        <dbReference type="EC" id="2.7.4.6"/>
    </reaction>
</comment>
<comment type="catalytic activity">
    <reaction evidence="1">
        <text>a ribonucleoside 5'-diphosphate + ATP = a ribonucleoside 5'-triphosphate + ADP</text>
        <dbReference type="Rhea" id="RHEA:18113"/>
        <dbReference type="ChEBI" id="CHEBI:30616"/>
        <dbReference type="ChEBI" id="CHEBI:57930"/>
        <dbReference type="ChEBI" id="CHEBI:61557"/>
        <dbReference type="ChEBI" id="CHEBI:456216"/>
        <dbReference type="EC" id="2.7.4.6"/>
    </reaction>
</comment>
<comment type="cofactor">
    <cofactor evidence="1">
        <name>Mg(2+)</name>
        <dbReference type="ChEBI" id="CHEBI:18420"/>
    </cofactor>
</comment>
<comment type="subunit">
    <text evidence="1">Homotetramer.</text>
</comment>
<comment type="subcellular location">
    <subcellularLocation>
        <location evidence="1">Cytoplasm</location>
    </subcellularLocation>
</comment>
<comment type="similarity">
    <text evidence="1">Belongs to the NDK family.</text>
</comment>
<dbReference type="EC" id="2.7.4.6" evidence="1"/>
<dbReference type="EMBL" id="CP000046">
    <property type="protein sequence ID" value="AAW36704.1"/>
    <property type="molecule type" value="Genomic_DNA"/>
</dbReference>
<dbReference type="RefSeq" id="WP_000442480.1">
    <property type="nucleotide sequence ID" value="NZ_JBGOFO010000003.1"/>
</dbReference>
<dbReference type="PDB" id="3Q83">
    <property type="method" value="X-ray"/>
    <property type="resolution" value="2.50 A"/>
    <property type="chains" value="A/B/C/D/E/F=1-149"/>
</dbReference>
<dbReference type="PDB" id="3Q86">
    <property type="method" value="X-ray"/>
    <property type="resolution" value="2.38 A"/>
    <property type="chains" value="A/B=1-149"/>
</dbReference>
<dbReference type="PDB" id="3Q89">
    <property type="method" value="X-ray"/>
    <property type="resolution" value="2.90 A"/>
    <property type="chains" value="A/B/C/D/E/F/G/H=1-149"/>
</dbReference>
<dbReference type="PDB" id="3Q8U">
    <property type="method" value="X-ray"/>
    <property type="resolution" value="2.22 A"/>
    <property type="chains" value="A/B/C/D/E/F=1-149"/>
</dbReference>
<dbReference type="PDB" id="3Q8V">
    <property type="method" value="X-ray"/>
    <property type="resolution" value="2.50 A"/>
    <property type="chains" value="A/B/C/D/E/F/G/H=1-149"/>
</dbReference>
<dbReference type="PDB" id="3Q8Y">
    <property type="method" value="X-ray"/>
    <property type="resolution" value="2.70 A"/>
    <property type="chains" value="A/B/C/D/E/F/G/H=1-149"/>
</dbReference>
<dbReference type="PDBsum" id="3Q83"/>
<dbReference type="PDBsum" id="3Q86"/>
<dbReference type="PDBsum" id="3Q89"/>
<dbReference type="PDBsum" id="3Q8U"/>
<dbReference type="PDBsum" id="3Q8V"/>
<dbReference type="PDBsum" id="3Q8Y"/>
<dbReference type="SMR" id="Q5HFV4"/>
<dbReference type="GeneID" id="66839658"/>
<dbReference type="KEGG" id="sac:SACOL1509"/>
<dbReference type="HOGENOM" id="CLU_060216_6_3_9"/>
<dbReference type="EvolutionaryTrace" id="Q5HFV4"/>
<dbReference type="Proteomes" id="UP000000530">
    <property type="component" value="Chromosome"/>
</dbReference>
<dbReference type="GO" id="GO:0005737">
    <property type="term" value="C:cytoplasm"/>
    <property type="evidence" value="ECO:0007669"/>
    <property type="project" value="UniProtKB-SubCell"/>
</dbReference>
<dbReference type="GO" id="GO:0005524">
    <property type="term" value="F:ATP binding"/>
    <property type="evidence" value="ECO:0007669"/>
    <property type="project" value="UniProtKB-UniRule"/>
</dbReference>
<dbReference type="GO" id="GO:0046872">
    <property type="term" value="F:metal ion binding"/>
    <property type="evidence" value="ECO:0007669"/>
    <property type="project" value="UniProtKB-KW"/>
</dbReference>
<dbReference type="GO" id="GO:0004550">
    <property type="term" value="F:nucleoside diphosphate kinase activity"/>
    <property type="evidence" value="ECO:0007669"/>
    <property type="project" value="UniProtKB-UniRule"/>
</dbReference>
<dbReference type="GO" id="GO:0006241">
    <property type="term" value="P:CTP biosynthetic process"/>
    <property type="evidence" value="ECO:0007669"/>
    <property type="project" value="UniProtKB-UniRule"/>
</dbReference>
<dbReference type="GO" id="GO:0006183">
    <property type="term" value="P:GTP biosynthetic process"/>
    <property type="evidence" value="ECO:0007669"/>
    <property type="project" value="UniProtKB-UniRule"/>
</dbReference>
<dbReference type="GO" id="GO:0006228">
    <property type="term" value="P:UTP biosynthetic process"/>
    <property type="evidence" value="ECO:0007669"/>
    <property type="project" value="UniProtKB-UniRule"/>
</dbReference>
<dbReference type="CDD" id="cd04413">
    <property type="entry name" value="NDPk_I"/>
    <property type="match status" value="1"/>
</dbReference>
<dbReference type="FunFam" id="3.30.70.141:FF:000002">
    <property type="entry name" value="Nucleoside diphosphate kinase"/>
    <property type="match status" value="1"/>
</dbReference>
<dbReference type="Gene3D" id="3.30.70.141">
    <property type="entry name" value="Nucleoside diphosphate kinase-like domain"/>
    <property type="match status" value="1"/>
</dbReference>
<dbReference type="HAMAP" id="MF_00451">
    <property type="entry name" value="NDP_kinase"/>
    <property type="match status" value="1"/>
</dbReference>
<dbReference type="InterPro" id="IPR034907">
    <property type="entry name" value="NDK-like_dom"/>
</dbReference>
<dbReference type="InterPro" id="IPR036850">
    <property type="entry name" value="NDK-like_dom_sf"/>
</dbReference>
<dbReference type="InterPro" id="IPR001564">
    <property type="entry name" value="Nucleoside_diP_kinase"/>
</dbReference>
<dbReference type="InterPro" id="IPR023005">
    <property type="entry name" value="Nucleoside_diP_kinase_AS"/>
</dbReference>
<dbReference type="NCBIfam" id="NF001908">
    <property type="entry name" value="PRK00668.1"/>
    <property type="match status" value="1"/>
</dbReference>
<dbReference type="PANTHER" id="PTHR11349">
    <property type="entry name" value="NUCLEOSIDE DIPHOSPHATE KINASE"/>
    <property type="match status" value="1"/>
</dbReference>
<dbReference type="Pfam" id="PF00334">
    <property type="entry name" value="NDK"/>
    <property type="match status" value="1"/>
</dbReference>
<dbReference type="PRINTS" id="PR01243">
    <property type="entry name" value="NUCDPKINASE"/>
</dbReference>
<dbReference type="SMART" id="SM00562">
    <property type="entry name" value="NDK"/>
    <property type="match status" value="1"/>
</dbReference>
<dbReference type="SUPFAM" id="SSF54919">
    <property type="entry name" value="Nucleoside diphosphate kinase, NDK"/>
    <property type="match status" value="1"/>
</dbReference>
<dbReference type="PROSITE" id="PS00469">
    <property type="entry name" value="NDPK"/>
    <property type="match status" value="1"/>
</dbReference>
<dbReference type="PROSITE" id="PS51374">
    <property type="entry name" value="NDPK_LIKE"/>
    <property type="match status" value="1"/>
</dbReference>
<keyword id="KW-0002">3D-structure</keyword>
<keyword id="KW-0067">ATP-binding</keyword>
<keyword id="KW-0963">Cytoplasm</keyword>
<keyword id="KW-0418">Kinase</keyword>
<keyword id="KW-0460">Magnesium</keyword>
<keyword id="KW-0479">Metal-binding</keyword>
<keyword id="KW-0546">Nucleotide metabolism</keyword>
<keyword id="KW-0547">Nucleotide-binding</keyword>
<keyword id="KW-0597">Phosphoprotein</keyword>
<keyword id="KW-0808">Transferase</keyword>